<gene>
    <name type="primary">putP</name>
    <name type="ordered locus">SaurJH1_1991</name>
</gene>
<name>PUTP_STAA2</name>
<feature type="chain" id="PRO_0000364094" description="Sodium/proline symporter">
    <location>
        <begin position="1"/>
        <end position="512"/>
    </location>
</feature>
<feature type="transmembrane region" description="Helical" evidence="3">
    <location>
        <begin position="16"/>
        <end position="36"/>
    </location>
</feature>
<feature type="transmembrane region" description="Helical" evidence="3">
    <location>
        <begin position="54"/>
        <end position="74"/>
    </location>
</feature>
<feature type="transmembrane region" description="Helical" evidence="3">
    <location>
        <begin position="85"/>
        <end position="105"/>
    </location>
</feature>
<feature type="transmembrane region" description="Helical" evidence="3">
    <location>
        <begin position="139"/>
        <end position="159"/>
    </location>
</feature>
<feature type="transmembrane region" description="Helical" evidence="3">
    <location>
        <begin position="174"/>
        <end position="194"/>
    </location>
</feature>
<feature type="transmembrane region" description="Helical" evidence="3">
    <location>
        <begin position="200"/>
        <end position="220"/>
    </location>
</feature>
<feature type="transmembrane region" description="Helical" evidence="3">
    <location>
        <begin position="240"/>
        <end position="260"/>
    </location>
</feature>
<feature type="transmembrane region" description="Helical" evidence="3">
    <location>
        <begin position="286"/>
        <end position="306"/>
    </location>
</feature>
<feature type="transmembrane region" description="Helical" evidence="3">
    <location>
        <begin position="327"/>
        <end position="347"/>
    </location>
</feature>
<feature type="transmembrane region" description="Helical" evidence="3">
    <location>
        <begin position="381"/>
        <end position="401"/>
    </location>
</feature>
<feature type="transmembrane region" description="Helical" evidence="3">
    <location>
        <begin position="410"/>
        <end position="430"/>
    </location>
</feature>
<feature type="transmembrane region" description="Helical" evidence="3">
    <location>
        <begin position="438"/>
        <end position="458"/>
    </location>
</feature>
<feature type="transmembrane region" description="Helical" evidence="3">
    <location>
        <begin position="467"/>
        <end position="487"/>
    </location>
</feature>
<keyword id="KW-0029">Amino-acid transport</keyword>
<keyword id="KW-1003">Cell membrane</keyword>
<keyword id="KW-0406">Ion transport</keyword>
<keyword id="KW-0472">Membrane</keyword>
<keyword id="KW-0915">Sodium</keyword>
<keyword id="KW-0739">Sodium transport</keyword>
<keyword id="KW-0769">Symport</keyword>
<keyword id="KW-0812">Transmembrane</keyword>
<keyword id="KW-1133">Transmembrane helix</keyword>
<keyword id="KW-0813">Transport</keyword>
<accession>A6U307</accession>
<evidence type="ECO:0000250" key="1">
    <source>
        <dbReference type="UniProtKB" id="P07117"/>
    </source>
</evidence>
<evidence type="ECO:0000250" key="2">
    <source>
        <dbReference type="UniProtKB" id="Q2FWY7"/>
    </source>
</evidence>
<evidence type="ECO:0000255" key="3"/>
<evidence type="ECO:0000305" key="4"/>
<sequence length="512" mass="55976">MLTMGTALSQQVDANWQTYIMIAVYFLILIVIGFYGYKQATGNLSEYMLGGRSIGPYITALSAGASDMSGWMIMGLPGSVYSTGLSAMWITIGLTLGAYINYFVVAPRLRVYTELAGDAITLPDFFKNRLNDKNNVLKIISGLIIVVFFTLYTHSGFVSGGKLFESAFGLDYHFGLILVAFIVIFYTFFGGYLAVSITDFFQGVIMLIAMVMVPIVAMMNLNGWGTFHDVAAMKPTNLNLFKGLSFIGIISLFSWGLGYFGQPHIIVRFMSIKSHKMLPKARRLGISWMAVGLLGAVAVGLTGIAFVPAYHIKLEDPETLFIVMSQVLFHPLVGGFLLAAILAAIMSTISSQLLVTSSSLTEDFYKLIRGEEKAKTHQKEFVMIGRLSVLVVAIVAIAIAWNPNDTILNLVGNAWAGFGASFSPLVLFALYWKGLTRAGAVSGMVSGALVVIVWIAWIKPLAHINEIFGLYEIIPGFIVSVIVTYVVSKLTKKPGAFVETDLNKVRDIVREK</sequence>
<organism>
    <name type="scientific">Staphylococcus aureus (strain JH1)</name>
    <dbReference type="NCBI Taxonomy" id="359787"/>
    <lineage>
        <taxon>Bacteria</taxon>
        <taxon>Bacillati</taxon>
        <taxon>Bacillota</taxon>
        <taxon>Bacilli</taxon>
        <taxon>Bacillales</taxon>
        <taxon>Staphylococcaceae</taxon>
        <taxon>Staphylococcus</taxon>
    </lineage>
</organism>
<proteinExistence type="inferred from homology"/>
<comment type="function">
    <text evidence="1 2">Catalyzes the sodium-dependent uptake of extracellular L-proline (By similarity). Since most S.aureus strains are L-proline auxotrophs, this transporter may aid the bacterial persistence during an infection of tissues with low proline concentrations (By similarity).</text>
</comment>
<comment type="catalytic activity">
    <reaction evidence="1">
        <text>L-proline(in) + Na(+)(in) = L-proline(out) + Na(+)(out)</text>
        <dbReference type="Rhea" id="RHEA:28967"/>
        <dbReference type="ChEBI" id="CHEBI:29101"/>
        <dbReference type="ChEBI" id="CHEBI:60039"/>
    </reaction>
</comment>
<comment type="subcellular location">
    <subcellularLocation>
        <location evidence="4">Cell membrane</location>
        <topology evidence="3">Multi-pass membrane protein</topology>
    </subcellularLocation>
</comment>
<comment type="similarity">
    <text evidence="4">Belongs to the sodium:solute symporter (SSF) (TC 2.A.21) family.</text>
</comment>
<reference key="1">
    <citation type="submission" date="2007-06" db="EMBL/GenBank/DDBJ databases">
        <title>Complete sequence of chromosome of Staphylococcus aureus subsp. aureus JH1.</title>
        <authorList>
            <consortium name="US DOE Joint Genome Institute"/>
            <person name="Copeland A."/>
            <person name="Lucas S."/>
            <person name="Lapidus A."/>
            <person name="Barry K."/>
            <person name="Detter J.C."/>
            <person name="Glavina del Rio T."/>
            <person name="Hammon N."/>
            <person name="Israni S."/>
            <person name="Dalin E."/>
            <person name="Tice H."/>
            <person name="Pitluck S."/>
            <person name="Chain P."/>
            <person name="Malfatti S."/>
            <person name="Shin M."/>
            <person name="Vergez L."/>
            <person name="Schmutz J."/>
            <person name="Larimer F."/>
            <person name="Land M."/>
            <person name="Hauser L."/>
            <person name="Kyrpides N."/>
            <person name="Ivanova N."/>
            <person name="Tomasz A."/>
            <person name="Richardson P."/>
        </authorList>
    </citation>
    <scope>NUCLEOTIDE SEQUENCE [LARGE SCALE GENOMIC DNA]</scope>
    <source>
        <strain>JH1</strain>
    </source>
</reference>
<dbReference type="EMBL" id="CP000736">
    <property type="protein sequence ID" value="ABR52825.1"/>
    <property type="molecule type" value="Genomic_DNA"/>
</dbReference>
<dbReference type="SMR" id="A6U307"/>
<dbReference type="KEGG" id="sah:SaurJH1_1991"/>
<dbReference type="HOGENOM" id="CLU_018808_15_2_9"/>
<dbReference type="GO" id="GO:0005886">
    <property type="term" value="C:plasma membrane"/>
    <property type="evidence" value="ECO:0007669"/>
    <property type="project" value="UniProtKB-SubCell"/>
</dbReference>
<dbReference type="GO" id="GO:0015193">
    <property type="term" value="F:L-proline transmembrane transporter activity"/>
    <property type="evidence" value="ECO:0007669"/>
    <property type="project" value="TreeGrafter"/>
</dbReference>
<dbReference type="GO" id="GO:0005298">
    <property type="term" value="F:proline:sodium symporter activity"/>
    <property type="evidence" value="ECO:0007669"/>
    <property type="project" value="InterPro"/>
</dbReference>
<dbReference type="GO" id="GO:0031402">
    <property type="term" value="F:sodium ion binding"/>
    <property type="evidence" value="ECO:0007669"/>
    <property type="project" value="InterPro"/>
</dbReference>
<dbReference type="GO" id="GO:0015824">
    <property type="term" value="P:proline transport"/>
    <property type="evidence" value="ECO:0007669"/>
    <property type="project" value="InterPro"/>
</dbReference>
<dbReference type="CDD" id="cd11475">
    <property type="entry name" value="SLC5sbd_PutP"/>
    <property type="match status" value="1"/>
</dbReference>
<dbReference type="FunFam" id="1.20.1730.10:FF:000002">
    <property type="entry name" value="Sodium/proline symporter"/>
    <property type="match status" value="1"/>
</dbReference>
<dbReference type="Gene3D" id="1.20.1730.10">
    <property type="entry name" value="Sodium/glucose cotransporter"/>
    <property type="match status" value="1"/>
</dbReference>
<dbReference type="InterPro" id="IPR038377">
    <property type="entry name" value="Na/Glc_symporter_sf"/>
</dbReference>
<dbReference type="InterPro" id="IPR011851">
    <property type="entry name" value="Na/Pro_symporter"/>
</dbReference>
<dbReference type="InterPro" id="IPR001734">
    <property type="entry name" value="Na/solute_symporter"/>
</dbReference>
<dbReference type="InterPro" id="IPR050277">
    <property type="entry name" value="Sodium:Solute_Symporter"/>
</dbReference>
<dbReference type="NCBIfam" id="TIGR02121">
    <property type="entry name" value="Na_Pro_sym"/>
    <property type="match status" value="1"/>
</dbReference>
<dbReference type="NCBIfam" id="TIGR00813">
    <property type="entry name" value="sss"/>
    <property type="match status" value="1"/>
</dbReference>
<dbReference type="PANTHER" id="PTHR48086">
    <property type="entry name" value="SODIUM/PROLINE SYMPORTER-RELATED"/>
    <property type="match status" value="1"/>
</dbReference>
<dbReference type="PANTHER" id="PTHR48086:SF3">
    <property type="entry name" value="SODIUM_PROLINE SYMPORTER"/>
    <property type="match status" value="1"/>
</dbReference>
<dbReference type="Pfam" id="PF00474">
    <property type="entry name" value="SSF"/>
    <property type="match status" value="1"/>
</dbReference>
<dbReference type="PROSITE" id="PS50283">
    <property type="entry name" value="NA_SOLUT_SYMP_3"/>
    <property type="match status" value="1"/>
</dbReference>
<protein>
    <recommendedName>
        <fullName>Sodium/proline symporter</fullName>
    </recommendedName>
    <alternativeName>
        <fullName>Proline permease</fullName>
    </alternativeName>
</protein>